<keyword id="KW-0963">Cytoplasm</keyword>
<keyword id="KW-0238">DNA-binding</keyword>
<accession>A4VSS3</accession>
<dbReference type="EMBL" id="CP000407">
    <property type="protein sequence ID" value="ABP89162.1"/>
    <property type="molecule type" value="Genomic_DNA"/>
</dbReference>
<dbReference type="SMR" id="A4VSS3"/>
<dbReference type="STRING" id="391295.SSU05_0194"/>
<dbReference type="KEGG" id="ssu:SSU05_0194"/>
<dbReference type="eggNOG" id="COG0718">
    <property type="taxonomic scope" value="Bacteria"/>
</dbReference>
<dbReference type="HOGENOM" id="CLU_140930_1_1_9"/>
<dbReference type="BioCyc" id="SSUI391295:GHI8-224-MONOMER"/>
<dbReference type="GO" id="GO:0043590">
    <property type="term" value="C:bacterial nucleoid"/>
    <property type="evidence" value="ECO:0007669"/>
    <property type="project" value="UniProtKB-UniRule"/>
</dbReference>
<dbReference type="GO" id="GO:0005829">
    <property type="term" value="C:cytosol"/>
    <property type="evidence" value="ECO:0007669"/>
    <property type="project" value="TreeGrafter"/>
</dbReference>
<dbReference type="GO" id="GO:0003677">
    <property type="term" value="F:DNA binding"/>
    <property type="evidence" value="ECO:0007669"/>
    <property type="project" value="UniProtKB-UniRule"/>
</dbReference>
<dbReference type="Gene3D" id="3.30.1310.10">
    <property type="entry name" value="Nucleoid-associated protein YbaB-like domain"/>
    <property type="match status" value="1"/>
</dbReference>
<dbReference type="HAMAP" id="MF_00274">
    <property type="entry name" value="DNA_YbaB_EbfC"/>
    <property type="match status" value="1"/>
</dbReference>
<dbReference type="InterPro" id="IPR036894">
    <property type="entry name" value="YbaB-like_sf"/>
</dbReference>
<dbReference type="InterPro" id="IPR004401">
    <property type="entry name" value="YbaB/EbfC"/>
</dbReference>
<dbReference type="NCBIfam" id="TIGR00103">
    <property type="entry name" value="DNA_YbaB_EbfC"/>
    <property type="match status" value="1"/>
</dbReference>
<dbReference type="PANTHER" id="PTHR33449">
    <property type="entry name" value="NUCLEOID-ASSOCIATED PROTEIN YBAB"/>
    <property type="match status" value="1"/>
</dbReference>
<dbReference type="PANTHER" id="PTHR33449:SF1">
    <property type="entry name" value="NUCLEOID-ASSOCIATED PROTEIN YBAB"/>
    <property type="match status" value="1"/>
</dbReference>
<dbReference type="Pfam" id="PF02575">
    <property type="entry name" value="YbaB_DNA_bd"/>
    <property type="match status" value="1"/>
</dbReference>
<dbReference type="PIRSF" id="PIRSF004555">
    <property type="entry name" value="UCP004555"/>
    <property type="match status" value="1"/>
</dbReference>
<dbReference type="SUPFAM" id="SSF82607">
    <property type="entry name" value="YbaB-like"/>
    <property type="match status" value="1"/>
</dbReference>
<name>Y194_STRSY</name>
<comment type="function">
    <text evidence="1">Binds to DNA and alters its conformation. May be involved in regulation of gene expression, nucleoid organization and DNA protection.</text>
</comment>
<comment type="subunit">
    <text evidence="1">Homodimer.</text>
</comment>
<comment type="subcellular location">
    <subcellularLocation>
        <location evidence="1">Cytoplasm</location>
        <location evidence="1">Nucleoid</location>
    </subcellularLocation>
</comment>
<comment type="similarity">
    <text evidence="1">Belongs to the YbaB/EbfC family.</text>
</comment>
<proteinExistence type="inferred from homology"/>
<reference key="1">
    <citation type="journal article" date="2007" name="PLoS ONE">
        <title>A glimpse of streptococcal toxic shock syndrome from comparative genomics of S. suis 2 Chinese isolates.</title>
        <authorList>
            <person name="Chen C."/>
            <person name="Tang J."/>
            <person name="Dong W."/>
            <person name="Wang C."/>
            <person name="Feng Y."/>
            <person name="Wang J."/>
            <person name="Zheng F."/>
            <person name="Pan X."/>
            <person name="Liu D."/>
            <person name="Li M."/>
            <person name="Song Y."/>
            <person name="Zhu X."/>
            <person name="Sun H."/>
            <person name="Feng T."/>
            <person name="Guo Z."/>
            <person name="Ju A."/>
            <person name="Ge J."/>
            <person name="Dong Y."/>
            <person name="Sun W."/>
            <person name="Jiang Y."/>
            <person name="Wang J."/>
            <person name="Yan J."/>
            <person name="Yang H."/>
            <person name="Wang X."/>
            <person name="Gao G.F."/>
            <person name="Yang R."/>
            <person name="Wang J."/>
            <person name="Yu J."/>
        </authorList>
    </citation>
    <scope>NUCLEOTIDE SEQUENCE [LARGE SCALE GENOMIC DNA]</scope>
    <source>
        <strain>05ZYH33</strain>
    </source>
</reference>
<gene>
    <name type="ordered locus">SSU05_0194</name>
</gene>
<sequence>MMNMQNMMRQAQKLQKQMEKSQAELAATQFTGSSVQDLVTATFTGDKKLVSIDFKADVVDADDLETLQEMTIQAVNAALTKVDEATQKKLGAFAGKLPF</sequence>
<evidence type="ECO:0000255" key="1">
    <source>
        <dbReference type="HAMAP-Rule" id="MF_00274"/>
    </source>
</evidence>
<organism>
    <name type="scientific">Streptococcus suis (strain 05ZYH33)</name>
    <dbReference type="NCBI Taxonomy" id="391295"/>
    <lineage>
        <taxon>Bacteria</taxon>
        <taxon>Bacillati</taxon>
        <taxon>Bacillota</taxon>
        <taxon>Bacilli</taxon>
        <taxon>Lactobacillales</taxon>
        <taxon>Streptococcaceae</taxon>
        <taxon>Streptococcus</taxon>
    </lineage>
</organism>
<feature type="chain" id="PRO_1000003846" description="Nucleoid-associated protein SSU05_0194">
    <location>
        <begin position="1"/>
        <end position="99"/>
    </location>
</feature>
<protein>
    <recommendedName>
        <fullName evidence="1">Nucleoid-associated protein SSU05_0194</fullName>
    </recommendedName>
</protein>